<proteinExistence type="evidence at protein level"/>
<keyword id="KW-0002">3D-structure</keyword>
<keyword id="KW-0025">Alternative splicing</keyword>
<keyword id="KW-0175">Coiled coil</keyword>
<keyword id="KW-0963">Cytoplasm</keyword>
<keyword id="KW-0217">Developmental protein</keyword>
<keyword id="KW-0221">Differentiation</keyword>
<keyword id="KW-0524">Neurogenesis</keyword>
<keyword id="KW-0597">Phosphoprotein</keyword>
<keyword id="KW-1185">Reference proteome</keyword>
<protein>
    <recommendedName>
        <fullName>Growth arrest-specific protein 7</fullName>
        <shortName>GAS-7</shortName>
    </recommendedName>
</protein>
<name>GAS7_MOUSE</name>
<gene>
    <name type="primary">Gas7</name>
</gene>
<comment type="function">
    <text>May play a role in promoting maturation and morphological differentiation of cerebellar neurons.</text>
</comment>
<comment type="subcellular location">
    <subcellularLocation>
        <location>Cytoplasm</location>
    </subcellularLocation>
</comment>
<comment type="alternative products">
    <event type="alternative splicing"/>
    <isoform>
        <id>Q60780-1</id>
        <name>1</name>
        <sequence type="displayed"/>
    </isoform>
    <isoform>
        <id>Q60780-2</id>
        <name>2</name>
        <name>GAS7-CB</name>
        <sequence type="described" ref="VSP_006804 VSP_006805"/>
    </isoform>
</comment>
<comment type="tissue specificity">
    <text evidence="6">Expressed abundantly in brain with lower levels in heart and testis. In the brain, expressed prominently in the Purkinje layer of the cerebellum, moderately in hippocampus, and less extensively in cerebral cortex and caudate putamen.</text>
</comment>
<evidence type="ECO:0000250" key="1">
    <source>
        <dbReference type="UniProtKB" id="O60861"/>
    </source>
</evidence>
<evidence type="ECO:0000255" key="2"/>
<evidence type="ECO:0000255" key="3">
    <source>
        <dbReference type="PROSITE-ProRule" id="PRU00224"/>
    </source>
</evidence>
<evidence type="ECO:0000255" key="4">
    <source>
        <dbReference type="PROSITE-ProRule" id="PRU01077"/>
    </source>
</evidence>
<evidence type="ECO:0000256" key="5">
    <source>
        <dbReference type="SAM" id="MobiDB-lite"/>
    </source>
</evidence>
<evidence type="ECO:0000269" key="6">
    <source>
    </source>
</evidence>
<evidence type="ECO:0000305" key="7"/>
<evidence type="ECO:0007744" key="8">
    <source>
    </source>
</evidence>
<evidence type="ECO:0007829" key="9">
    <source>
        <dbReference type="PDB" id="6IKN"/>
    </source>
</evidence>
<sequence length="421" mass="48174">MATALQKPGMVPPPPGEESQTVILPPGWHSYLSPQGRRYYVNTTTNETTWERPSSSPGISASPAPHRSSLPTTVNGYHASGTPAHPPETAHMSLRKSTGDSQNLGSSSPGRKQSKENTITINCVTFPHPDTMPEQQLLKPTEWSYCDYFWADKKDPQGNGTVAGFELLLQKQLKGKQMQKEMSEFIRERIKIEEEYAKNLAKLSQNSLAAQEEGSLGEAWAQVKKSLADEAEVHLKFSAKLHSEVEKPLMNFRENFKKDMKKCDHHIADLRKQLASRYASVEKARKALTERQKDLEMKTQQLEIKLSNKTEEDIKKARRKSTQAGDDLMRCVDLYNQAQSKWFEEMVTTTLELERLEVERVEMIRQHLCQYTQLRHETDMFNQSTVEPVDQLLRKVDPAKDRELWVREHKTGNIRPVDMEI</sequence>
<reference key="1">
    <citation type="journal article" date="1998" name="Proc. Natl. Acad. Sci. U.S.A.">
        <title>Gas7: a gene expressed preferentially in growth-arrested fibroblasts and terminally differentiated Purkinje neurons affects neurite formation.</title>
        <authorList>
            <person name="Ju Y.-T."/>
            <person name="Chang A.C.Y."/>
            <person name="She B.-R."/>
            <person name="Tsaur M.-L."/>
            <person name="Hwang H.-M."/>
            <person name="Chao C.C.-K."/>
            <person name="Cohen S.N."/>
            <person name="Lin-Chao S."/>
        </authorList>
    </citation>
    <scope>NUCLEOTIDE SEQUENCE [MRNA]</scope>
    <scope>CHARACTERIZATION (ISOFORM 1)</scope>
    <source>
        <strain>SWR/J</strain>
    </source>
</reference>
<reference key="2">
    <citation type="journal article" date="1999" name="Genomics">
        <title>The gas7 gene encodes two protein isoforms differentially expressed within the brain.</title>
        <authorList>
            <person name="Lazakovitch E.M."/>
            <person name="She B.R."/>
            <person name="Lien C.L."/>
            <person name="Woo W.M."/>
            <person name="Ju Y.T."/>
            <person name="Lin-Chao S."/>
        </authorList>
    </citation>
    <scope>NUCLEOTIDE SEQUENCE [GENOMIC DNA / MRNA]</scope>
    <scope>ALTERNATIVE SPLICING</scope>
    <scope>TISSUE SPECIFICITY</scope>
    <source>
        <strain>ICR</strain>
        <tissue>Brain</tissue>
    </source>
</reference>
<reference key="3">
    <citation type="journal article" date="2010" name="Cell">
        <title>A tissue-specific atlas of mouse protein phosphorylation and expression.</title>
        <authorList>
            <person name="Huttlin E.L."/>
            <person name="Jedrychowski M.P."/>
            <person name="Elias J.E."/>
            <person name="Goswami T."/>
            <person name="Rad R."/>
            <person name="Beausoleil S.A."/>
            <person name="Villen J."/>
            <person name="Haas W."/>
            <person name="Sowa M.E."/>
            <person name="Gygi S.P."/>
        </authorList>
    </citation>
    <scope>PHOSPHORYLATION [LARGE SCALE ANALYSIS] AT SER-108</scope>
    <scope>IDENTIFICATION BY MASS SPECTROMETRY [LARGE SCALE ANALYSIS]</scope>
    <source>
        <tissue>Brain</tissue>
        <tissue>Kidney</tissue>
        <tissue>Lung</tissue>
        <tissue>Testis</tissue>
    </source>
</reference>
<organism>
    <name type="scientific">Mus musculus</name>
    <name type="common">Mouse</name>
    <dbReference type="NCBI Taxonomy" id="10090"/>
    <lineage>
        <taxon>Eukaryota</taxon>
        <taxon>Metazoa</taxon>
        <taxon>Chordata</taxon>
        <taxon>Craniata</taxon>
        <taxon>Vertebrata</taxon>
        <taxon>Euteleostomi</taxon>
        <taxon>Mammalia</taxon>
        <taxon>Eutheria</taxon>
        <taxon>Euarchontoglires</taxon>
        <taxon>Glires</taxon>
        <taxon>Rodentia</taxon>
        <taxon>Myomorpha</taxon>
        <taxon>Muroidea</taxon>
        <taxon>Muridae</taxon>
        <taxon>Murinae</taxon>
        <taxon>Mus</taxon>
        <taxon>Mus</taxon>
    </lineage>
</organism>
<dbReference type="EMBL" id="U19860">
    <property type="protein sequence ID" value="AAA85259.1"/>
    <property type="molecule type" value="mRNA"/>
</dbReference>
<dbReference type="EMBL" id="AF133184">
    <property type="protein sequence ID" value="AAF15397.1"/>
    <property type="molecule type" value="mRNA"/>
</dbReference>
<dbReference type="EMBL" id="AF135442">
    <property type="protein sequence ID" value="AAF15398.1"/>
    <property type="molecule type" value="Genomic_DNA"/>
</dbReference>
<dbReference type="EMBL" id="AF135442">
    <property type="protein sequence ID" value="AAF15399.1"/>
    <property type="molecule type" value="Genomic_DNA"/>
</dbReference>
<dbReference type="RefSeq" id="NP_001389754.1">
    <molecule id="Q60780-2"/>
    <property type="nucleotide sequence ID" value="NM_001402825.1"/>
</dbReference>
<dbReference type="PDB" id="6IKN">
    <property type="method" value="X-ray"/>
    <property type="resolution" value="3.00 A"/>
    <property type="chains" value="A/B/C/D=102-421"/>
</dbReference>
<dbReference type="PDB" id="6IKO">
    <property type="method" value="X-ray"/>
    <property type="resolution" value="3.76 A"/>
    <property type="chains" value="A/B=5-421"/>
</dbReference>
<dbReference type="PDBsum" id="6IKN"/>
<dbReference type="PDBsum" id="6IKO"/>
<dbReference type="SMR" id="Q60780"/>
<dbReference type="FunCoup" id="Q60780">
    <property type="interactions" value="74"/>
</dbReference>
<dbReference type="IntAct" id="Q60780">
    <property type="interactions" value="1"/>
</dbReference>
<dbReference type="STRING" id="10090.ENSMUSP00000104322"/>
<dbReference type="GlyGen" id="Q60780">
    <property type="glycosylation" value="2 sites, 1 O-linked glycan (2 sites)"/>
</dbReference>
<dbReference type="iPTMnet" id="Q60780"/>
<dbReference type="PhosphoSitePlus" id="Q60780"/>
<dbReference type="SwissPalm" id="Q60780"/>
<dbReference type="jPOST" id="Q60780"/>
<dbReference type="PaxDb" id="10090-ENSMUSP00000104322"/>
<dbReference type="PeptideAtlas" id="Q60780"/>
<dbReference type="ProteomicsDB" id="267562">
    <molecule id="Q60780-1"/>
</dbReference>
<dbReference type="ProteomicsDB" id="267563">
    <molecule id="Q60780-2"/>
</dbReference>
<dbReference type="Pumba" id="Q60780"/>
<dbReference type="UCSC" id="uc007jmx.2">
    <molecule id="Q60780-2"/>
    <property type="organism name" value="mouse"/>
</dbReference>
<dbReference type="UCSC" id="uc033fwm.1">
    <molecule id="Q60780-1"/>
    <property type="organism name" value="mouse"/>
</dbReference>
<dbReference type="AGR" id="MGI:1202388"/>
<dbReference type="MGI" id="MGI:1202388">
    <property type="gene designation" value="Gas7"/>
</dbReference>
<dbReference type="eggNOG" id="KOG0940">
    <property type="taxonomic scope" value="Eukaryota"/>
</dbReference>
<dbReference type="eggNOG" id="KOG2398">
    <property type="taxonomic scope" value="Eukaryota"/>
</dbReference>
<dbReference type="InParanoid" id="Q60780"/>
<dbReference type="PhylomeDB" id="Q60780"/>
<dbReference type="CD-CODE" id="CE726F99">
    <property type="entry name" value="Postsynaptic density"/>
</dbReference>
<dbReference type="ChiTaRS" id="Gas7">
    <property type="organism name" value="mouse"/>
</dbReference>
<dbReference type="PRO" id="PR:Q60780"/>
<dbReference type="Proteomes" id="UP000000589">
    <property type="component" value="Unplaced"/>
</dbReference>
<dbReference type="RNAct" id="Q60780">
    <property type="molecule type" value="protein"/>
</dbReference>
<dbReference type="GO" id="GO:0005884">
    <property type="term" value="C:actin filament"/>
    <property type="evidence" value="ECO:0000314"/>
    <property type="project" value="MGI"/>
</dbReference>
<dbReference type="GO" id="GO:0005737">
    <property type="term" value="C:cytoplasm"/>
    <property type="evidence" value="ECO:0007669"/>
    <property type="project" value="UniProtKB-SubCell"/>
</dbReference>
<dbReference type="GO" id="GO:0001726">
    <property type="term" value="C:ruffle"/>
    <property type="evidence" value="ECO:0000314"/>
    <property type="project" value="MGI"/>
</dbReference>
<dbReference type="GO" id="GO:0051015">
    <property type="term" value="F:actin filament binding"/>
    <property type="evidence" value="ECO:0000314"/>
    <property type="project" value="MGI"/>
</dbReference>
<dbReference type="GO" id="GO:0051017">
    <property type="term" value="P:actin filament bundle assembly"/>
    <property type="evidence" value="ECO:0000314"/>
    <property type="project" value="MGI"/>
</dbReference>
<dbReference type="GO" id="GO:0030041">
    <property type="term" value="P:actin filament polymerization"/>
    <property type="evidence" value="ECO:0000314"/>
    <property type="project" value="MGI"/>
</dbReference>
<dbReference type="GO" id="GO:0030182">
    <property type="term" value="P:neuron differentiation"/>
    <property type="evidence" value="ECO:0000314"/>
    <property type="project" value="MGI"/>
</dbReference>
<dbReference type="GO" id="GO:0048812">
    <property type="term" value="P:neuron projection morphogenesis"/>
    <property type="evidence" value="ECO:0000315"/>
    <property type="project" value="MGI"/>
</dbReference>
<dbReference type="GO" id="GO:0008360">
    <property type="term" value="P:regulation of cell shape"/>
    <property type="evidence" value="ECO:0000314"/>
    <property type="project" value="MGI"/>
</dbReference>
<dbReference type="CDD" id="cd07649">
    <property type="entry name" value="F-BAR_GAS7"/>
    <property type="match status" value="1"/>
</dbReference>
<dbReference type="FunFam" id="2.20.70.10:FF:000033">
    <property type="entry name" value="Growth arrest specific 7"/>
    <property type="match status" value="1"/>
</dbReference>
<dbReference type="FunFam" id="1.20.1270.60:FF:000024">
    <property type="entry name" value="growth arrest-specific protein 7 isoform X2"/>
    <property type="match status" value="1"/>
</dbReference>
<dbReference type="Gene3D" id="2.20.70.10">
    <property type="match status" value="1"/>
</dbReference>
<dbReference type="Gene3D" id="1.20.1270.60">
    <property type="entry name" value="Arfaptin homology (AH) domain/BAR domain"/>
    <property type="match status" value="1"/>
</dbReference>
<dbReference type="InterPro" id="IPR027267">
    <property type="entry name" value="AH/BAR_dom_sf"/>
</dbReference>
<dbReference type="InterPro" id="IPR031160">
    <property type="entry name" value="F_BAR"/>
</dbReference>
<dbReference type="InterPro" id="IPR001060">
    <property type="entry name" value="FCH_dom"/>
</dbReference>
<dbReference type="InterPro" id="IPR037957">
    <property type="entry name" value="GAS7_F-BAR"/>
</dbReference>
<dbReference type="InterPro" id="IPR001202">
    <property type="entry name" value="WW_dom"/>
</dbReference>
<dbReference type="InterPro" id="IPR036020">
    <property type="entry name" value="WW_dom_sf"/>
</dbReference>
<dbReference type="PANTHER" id="PTHR23065:SF57">
    <property type="entry name" value="GROWTH ARREST-SPECIFIC PROTEIN 7"/>
    <property type="match status" value="1"/>
</dbReference>
<dbReference type="PANTHER" id="PTHR23065">
    <property type="entry name" value="PROLINE-SERINE-THREONINE PHOSPHATASE INTERACTING PROTEIN 1"/>
    <property type="match status" value="1"/>
</dbReference>
<dbReference type="Pfam" id="PF00611">
    <property type="entry name" value="FCH"/>
    <property type="match status" value="1"/>
</dbReference>
<dbReference type="Pfam" id="PF00397">
    <property type="entry name" value="WW"/>
    <property type="match status" value="1"/>
</dbReference>
<dbReference type="Pfam" id="PF16623">
    <property type="entry name" value="WW_FCH_linker"/>
    <property type="match status" value="1"/>
</dbReference>
<dbReference type="SMART" id="SM00055">
    <property type="entry name" value="FCH"/>
    <property type="match status" value="1"/>
</dbReference>
<dbReference type="SMART" id="SM00456">
    <property type="entry name" value="WW"/>
    <property type="match status" value="1"/>
</dbReference>
<dbReference type="SUPFAM" id="SSF103657">
    <property type="entry name" value="BAR/IMD domain-like"/>
    <property type="match status" value="1"/>
</dbReference>
<dbReference type="SUPFAM" id="SSF51045">
    <property type="entry name" value="WW domain"/>
    <property type="match status" value="1"/>
</dbReference>
<dbReference type="PROSITE" id="PS51741">
    <property type="entry name" value="F_BAR"/>
    <property type="match status" value="1"/>
</dbReference>
<dbReference type="PROSITE" id="PS01159">
    <property type="entry name" value="WW_DOMAIN_1"/>
    <property type="match status" value="1"/>
</dbReference>
<dbReference type="PROSITE" id="PS50020">
    <property type="entry name" value="WW_DOMAIN_2"/>
    <property type="match status" value="1"/>
</dbReference>
<accession>Q60780</accession>
<accession>Q9QY25</accession>
<accession>Q9QY26</accession>
<accession>Q9QY34</accession>
<feature type="chain" id="PRO_0000076058" description="Growth arrest-specific protein 7">
    <location>
        <begin position="1"/>
        <end position="421"/>
    </location>
</feature>
<feature type="domain" description="WW" evidence="3">
    <location>
        <begin position="22"/>
        <end position="55"/>
    </location>
</feature>
<feature type="domain" description="F-BAR" evidence="4">
    <location>
        <begin position="141"/>
        <end position="401"/>
    </location>
</feature>
<feature type="region of interest" description="Disordered" evidence="5">
    <location>
        <begin position="1"/>
        <end position="117"/>
    </location>
</feature>
<feature type="coiled-coil region" evidence="2">
    <location>
        <begin position="254"/>
        <end position="328"/>
    </location>
</feature>
<feature type="compositionally biased region" description="Polar residues" evidence="5">
    <location>
        <begin position="41"/>
        <end position="52"/>
    </location>
</feature>
<feature type="compositionally biased region" description="Low complexity" evidence="5">
    <location>
        <begin position="53"/>
        <end position="65"/>
    </location>
</feature>
<feature type="compositionally biased region" description="Polar residues" evidence="5">
    <location>
        <begin position="95"/>
        <end position="117"/>
    </location>
</feature>
<feature type="modified residue" description="Phosphoserine" evidence="1">
    <location>
        <position position="62"/>
    </location>
</feature>
<feature type="modified residue" description="Phosphoserine" evidence="8">
    <location>
        <position position="108"/>
    </location>
</feature>
<feature type="splice variant" id="VSP_006804" description="In isoform 2." evidence="7">
    <location>
        <begin position="1"/>
        <end position="81"/>
    </location>
</feature>
<feature type="splice variant" id="VSP_006805" description="In isoform 2." evidence="7">
    <original>TPAHPPETAHMSLRKSTGDS</original>
    <variation>MGKKMSNMENSFDDGSHLSP</variation>
    <location>
        <begin position="82"/>
        <end position="101"/>
    </location>
</feature>
<feature type="strand" evidence="9">
    <location>
        <begin position="118"/>
        <end position="121"/>
    </location>
</feature>
<feature type="strand" evidence="9">
    <location>
        <begin position="124"/>
        <end position="127"/>
    </location>
</feature>
<feature type="strand" evidence="9">
    <location>
        <begin position="138"/>
        <end position="142"/>
    </location>
</feature>
<feature type="turn" evidence="9">
    <location>
        <begin position="145"/>
        <end position="147"/>
    </location>
</feature>
<feature type="strand" evidence="9">
    <location>
        <begin position="156"/>
        <end position="159"/>
    </location>
</feature>
<feature type="helix" evidence="9">
    <location>
        <begin position="164"/>
        <end position="204"/>
    </location>
</feature>
<feature type="turn" evidence="9">
    <location>
        <begin position="208"/>
        <end position="211"/>
    </location>
</feature>
<feature type="helix" evidence="9">
    <location>
        <begin position="214"/>
        <end position="244"/>
    </location>
</feature>
<feature type="helix" evidence="9">
    <location>
        <begin position="246"/>
        <end position="250"/>
    </location>
</feature>
<feature type="helix" evidence="9">
    <location>
        <begin position="256"/>
        <end position="296"/>
    </location>
</feature>
<feature type="helix" evidence="9">
    <location>
        <begin position="299"/>
        <end position="305"/>
    </location>
</feature>
<feature type="helix" evidence="9">
    <location>
        <begin position="310"/>
        <end position="383"/>
    </location>
</feature>
<feature type="helix" evidence="9">
    <location>
        <begin position="387"/>
        <end position="394"/>
    </location>
</feature>
<feature type="helix" evidence="9">
    <location>
        <begin position="398"/>
        <end position="409"/>
    </location>
</feature>